<evidence type="ECO:0000250" key="1"/>
<evidence type="ECO:0000250" key="2">
    <source>
        <dbReference type="UniProtKB" id="G5BQH5"/>
    </source>
</evidence>
<evidence type="ECO:0000250" key="3">
    <source>
        <dbReference type="UniProtKB" id="P02647"/>
    </source>
</evidence>
<evidence type="ECO:0000250" key="4">
    <source>
        <dbReference type="UniProtKB" id="P04639"/>
    </source>
</evidence>
<evidence type="ECO:0000269" key="5">
    <source>
    </source>
</evidence>
<evidence type="ECO:0000305" key="6"/>
<reference key="1">
    <citation type="journal article" date="1993" name="Genomics">
        <title>Characterization of the apolipoprotein AI and CIII genes in the domestic pig.</title>
        <authorList>
            <person name="Birchbauer A."/>
            <person name="Knipping G."/>
            <person name="Juritsch B."/>
            <person name="Aschauer H."/>
            <person name="Zechner R."/>
        </authorList>
    </citation>
    <scope>NUCLEOTIDE SEQUENCE [GENOMIC DNA]</scope>
</reference>
<reference key="2">
    <citation type="journal article" date="1994" name="J. Neurochem.">
        <title>Expression of apolipoprotein A-I in porcine brain endothelium in vitro.</title>
        <authorList>
            <person name="Moeckel B."/>
            <person name="Zinke H."/>
            <person name="Flach R."/>
            <person name="Weiss B."/>
            <person name="Weiler-Guettler H."/>
            <person name="Gassen H."/>
        </authorList>
    </citation>
    <scope>NUCLEOTIDE SEQUENCE [MRNA]</scope>
    <source>
        <tissue>Brain</tissue>
        <tissue>Liver</tissue>
    </source>
</reference>
<reference key="3">
    <citation type="submission" date="1995-10" db="UniProtKB">
        <authorList>
            <person name="Hasler-Rapacz J.O."/>
            <person name="Chaudhary R."/>
            <person name="Chowdhary B.P."/>
            <person name="Trieu V.N."/>
            <person name="Jackson K."/>
            <person name="Gustavsson I."/>
            <person name="Rapacz J."/>
        </authorList>
    </citation>
    <scope>PROTEIN SEQUENCE OF 25-265</scope>
</reference>
<reference key="4">
    <citation type="journal article" date="1976" name="Biochemistry">
        <title>Characterization of the plasma lipoproteins and apoproteins of the Erythrocebus patas monkey.</title>
        <authorList>
            <person name="Mahley R.W."/>
            <person name="Weisgraber K.H."/>
            <person name="Innerarity T."/>
            <person name="Brewer H.B. Jr."/>
        </authorList>
    </citation>
    <scope>PROTEIN SEQUENCE OF 25-34</scope>
</reference>
<reference key="5">
    <citation type="journal article" date="1990" name="J. Neurochem.">
        <title>Synthesis of apolipoprotein A-1 in pig brain microvascular endothelial cells.</title>
        <authorList>
            <person name="Weiler-Guettler H."/>
            <person name="Sommerfeldt M."/>
            <person name="Papandrikopoulou A."/>
            <person name="Mischek U."/>
            <person name="Bonitz D."/>
            <person name="Frey A."/>
            <person name="Grupe M."/>
            <person name="Scheerer J."/>
            <person name="Gassen H.G."/>
        </authorList>
    </citation>
    <scope>NUCLEOTIDE SEQUENCE [MRNA] OF 34-265</scope>
    <source>
        <tissue>Brain</tissue>
    </source>
</reference>
<reference key="6">
    <citation type="journal article" date="1993" name="Gene">
        <title>Sequences and expression of the porcine apolipoprotein A-I and C-III mRNAs.</title>
        <authorList>
            <person name="Trieu V.N."/>
            <person name="Hasler-Rapacz J."/>
            <person name="Rapacz J."/>
            <person name="Black D.D."/>
        </authorList>
    </citation>
    <scope>NUCLEOTIDE SEQUENCE [MRNA] OF 105-265</scope>
    <scope>TISSUE SPECIFICITY</scope>
    <source>
        <tissue>Liver</tissue>
    </source>
</reference>
<reference key="7">
    <citation type="journal article" date="1993" name="Gene">
        <title>Sequence of the porcine apoA-I gene.</title>
        <authorList>
            <person name="Trieu V.N."/>
            <person name="Patel B."/>
            <person name="Zhan R."/>
            <person name="Black D.D."/>
        </authorList>
    </citation>
    <scope>NUCLEOTIDE SEQUENCE [GENOMIC DNA] OF 105-265</scope>
</reference>
<sequence length="265" mass="30325">MKAVVLTLAVLFLTGSQARHFWQQDDPQSPWDRVKDFATVYVDAIKDSGRDYVAQFEASALGKHLNLKLLDNWDSLGSTFTKVREQLGPVTQEFWDNLEKETEALRQEMSKDLEEVKKKVQPYLDDFQNKWQEEMETYRQKMAPLGAEFREGARQKVQELQEKLSPLAEELRDRLRAHVEALRQHVAPYSDDLRQRMAARFEALKEGGGSLAEYQAKAQEQLKALGEKAKPALEDLRQGLLPVLENLKVSILAAIDEASKKLNAQ</sequence>
<name>APOA1_PIG</name>
<feature type="signal peptide" evidence="1">
    <location>
        <begin position="1"/>
        <end position="18"/>
    </location>
</feature>
<feature type="chain" id="PRO_0000425336" description="Proapolipoprotein A-I">
    <location>
        <begin position="19"/>
        <end position="265"/>
    </location>
</feature>
<feature type="chain" id="PRO_0000001950" description="Apolipoprotein A-I">
    <location>
        <begin position="25"/>
        <end position="265"/>
    </location>
</feature>
<feature type="chain" id="PRO_0000416578" description="Truncated apolipoprotein A-I" evidence="1">
    <location>
        <begin position="25"/>
        <end position="264"/>
    </location>
</feature>
<feature type="repeat" description="1">
    <location>
        <begin position="67"/>
        <end position="88"/>
    </location>
</feature>
<feature type="repeat" description="2">
    <location>
        <begin position="89"/>
        <end position="110"/>
    </location>
</feature>
<feature type="repeat" description="3; half-length">
    <location>
        <begin position="111"/>
        <end position="121"/>
    </location>
</feature>
<feature type="repeat" description="4">
    <location>
        <begin position="122"/>
        <end position="142"/>
    </location>
</feature>
<feature type="repeat" description="5">
    <location>
        <begin position="144"/>
        <end position="165"/>
    </location>
</feature>
<feature type="repeat" description="6">
    <location>
        <begin position="166"/>
        <end position="187"/>
    </location>
</feature>
<feature type="repeat" description="7">
    <location>
        <begin position="188"/>
        <end position="209"/>
    </location>
</feature>
<feature type="repeat" description="8">
    <location>
        <begin position="210"/>
        <end position="230"/>
    </location>
</feature>
<feature type="repeat" description="9; half-length">
    <location>
        <begin position="231"/>
        <end position="241"/>
    </location>
</feature>
<feature type="repeat" description="10">
    <location>
        <begin position="242"/>
        <end position="265"/>
    </location>
</feature>
<feature type="region of interest" description="10 X approximate tandem repeats">
    <location>
        <begin position="67"/>
        <end position="265"/>
    </location>
</feature>
<feature type="modified residue" description="Methionine sulfoxide" evidence="1">
    <location>
        <position position="109"/>
    </location>
</feature>
<feature type="modified residue" description="Methionine sulfoxide" evidence="1">
    <location>
        <position position="135"/>
    </location>
</feature>
<feature type="sequence conflict" description="In Ref. 5; X17057." evidence="6" ref="5">
    <original>E</original>
    <variation>K</variation>
    <location>
        <position position="108"/>
    </location>
</feature>
<feature type="sequence conflict" description="In Ref. 2; CAA49234 and 5; X17057." evidence="6" ref="2 5">
    <location>
        <position position="143"/>
    </location>
</feature>
<feature type="sequence conflict" description="In Ref. 6; CAA42050." evidence="6" ref="6">
    <original>D</original>
    <variation>S</variation>
    <location>
        <position position="173"/>
    </location>
</feature>
<feature type="sequence conflict" description="In Ref. 2; CAA49234 and 5; X17057." evidence="6" ref="2 5">
    <original>E</original>
    <variation>A</variation>
    <location>
        <position position="180"/>
    </location>
</feature>
<feature type="sequence conflict" description="In Ref. 1; AAA30992 and 3; AA sequence." evidence="6" ref="1 3">
    <original>HV</original>
    <variation>QL</variation>
    <location>
        <begin position="185"/>
        <end position="186"/>
    </location>
</feature>
<feature type="sequence conflict" description="In Ref. 2; CAA49234 and 5; X17057." evidence="6" ref="2 5">
    <original>G</original>
    <variation>D</variation>
    <location>
        <position position="209"/>
    </location>
</feature>
<feature type="sequence conflict" description="In Ref. 6; CAA42050." evidence="6" ref="6">
    <original>A</original>
    <variation>G</variation>
    <location>
        <position position="224"/>
    </location>
</feature>
<protein>
    <recommendedName>
        <fullName>Apolipoprotein A-I</fullName>
        <shortName>Apo-AI</shortName>
        <shortName>ApoA-I</shortName>
    </recommendedName>
    <alternativeName>
        <fullName>Apolipoprotein A1</fullName>
    </alternativeName>
    <component>
        <recommendedName>
            <fullName>Proapolipoprotein A-I</fullName>
            <shortName>ProapoA-I</shortName>
        </recommendedName>
    </component>
    <component>
        <recommendedName>
            <fullName>Truncated apolipoprotein A-I</fullName>
        </recommendedName>
    </component>
</protein>
<keyword id="KW-0153">Cholesterol metabolism</keyword>
<keyword id="KW-0903">Direct protein sequencing</keyword>
<keyword id="KW-0325">Glycoprotein</keyword>
<keyword id="KW-0345">HDL</keyword>
<keyword id="KW-0443">Lipid metabolism</keyword>
<keyword id="KW-0445">Lipid transport</keyword>
<keyword id="KW-0449">Lipoprotein</keyword>
<keyword id="KW-0558">Oxidation</keyword>
<keyword id="KW-0564">Palmitate</keyword>
<keyword id="KW-0597">Phosphoprotein</keyword>
<keyword id="KW-1185">Reference proteome</keyword>
<keyword id="KW-0677">Repeat</keyword>
<keyword id="KW-0964">Secreted</keyword>
<keyword id="KW-0732">Signal</keyword>
<keyword id="KW-0753">Steroid metabolism</keyword>
<keyword id="KW-1207">Sterol metabolism</keyword>
<keyword id="KW-0813">Transport</keyword>
<organism>
    <name type="scientific">Sus scrofa</name>
    <name type="common">Pig</name>
    <dbReference type="NCBI Taxonomy" id="9823"/>
    <lineage>
        <taxon>Eukaryota</taxon>
        <taxon>Metazoa</taxon>
        <taxon>Chordata</taxon>
        <taxon>Craniata</taxon>
        <taxon>Vertebrata</taxon>
        <taxon>Euteleostomi</taxon>
        <taxon>Mammalia</taxon>
        <taxon>Eutheria</taxon>
        <taxon>Laurasiatheria</taxon>
        <taxon>Artiodactyla</taxon>
        <taxon>Suina</taxon>
        <taxon>Suidae</taxon>
        <taxon>Sus</taxon>
    </lineage>
</organism>
<comment type="function">
    <text>Participates in the reverse transport of cholesterol from tissues to the liver for excretion by promoting cholesterol efflux from tissues and by acting as a cofactor for the lecithin cholesterol acyltransferase (LCAT). As part of the SPAP complex, activates spermatozoa motility.</text>
</comment>
<comment type="subunit">
    <text evidence="2 3 4">Homodimer (By similarity). Interacts with APOA1BP and CLU. Component of a sperm activating protein complex (SPAP), consisting of APOA1, an immunoglobulin heavy chain, an immunoglobulin light chain and albumin. Interacts with NDRG1. Interacts with SCGB3A2 (By similarity). Interacts with NAXE and YJEFN3 (By similarity).</text>
</comment>
<comment type="subcellular location">
    <subcellularLocation>
        <location>Secreted</location>
    </subcellularLocation>
</comment>
<comment type="tissue specificity">
    <text evidence="5">Major protein of plasma HDL, also found in chylomicrons. Synthesized predominantly in the intestine and the liver.</text>
</comment>
<comment type="developmental stage">
    <text>Liver apoa-I expressed in fetal, newborn and suckling animals. Intestinal apoA-I only expressed in postpartum animals.</text>
</comment>
<comment type="PTM">
    <text evidence="1">Glycosylated.</text>
</comment>
<comment type="PTM">
    <text evidence="1">Palmitoylated.</text>
</comment>
<comment type="PTM">
    <text evidence="1">Phosphorylation sites are present in the extracellular medium.</text>
</comment>
<comment type="similarity">
    <text evidence="6">Belongs to the apolipoprotein A1/A4/E family.</text>
</comment>
<accession>P18648</accession>
<proteinExistence type="evidence at protein level"/>
<dbReference type="EMBL" id="L00626">
    <property type="protein sequence ID" value="AAA30992.1"/>
    <property type="molecule type" value="Genomic_DNA"/>
</dbReference>
<dbReference type="EMBL" id="X69477">
    <property type="protein sequence ID" value="CAA49234.1"/>
    <property type="molecule type" value="mRNA"/>
</dbReference>
<dbReference type="EMBL" id="X17057">
    <property type="status" value="NOT_ANNOTATED_CDS"/>
    <property type="molecule type" value="mRNA"/>
</dbReference>
<dbReference type="EMBL" id="X59414">
    <property type="protein sequence ID" value="CAA42050.1"/>
    <property type="molecule type" value="mRNA"/>
</dbReference>
<dbReference type="PIR" id="A46018">
    <property type="entry name" value="A46018"/>
</dbReference>
<dbReference type="PIR" id="JT0672">
    <property type="entry name" value="JT0672"/>
</dbReference>
<dbReference type="PIR" id="S21830">
    <property type="entry name" value="S21830"/>
</dbReference>
<dbReference type="PIR" id="S31394">
    <property type="entry name" value="S31394"/>
</dbReference>
<dbReference type="RefSeq" id="NP_999563.1">
    <property type="nucleotide sequence ID" value="NM_214398.1"/>
</dbReference>
<dbReference type="SMR" id="P18648"/>
<dbReference type="FunCoup" id="P18648">
    <property type="interactions" value="66"/>
</dbReference>
<dbReference type="STRING" id="9823.ENSSSCP00000033805"/>
<dbReference type="PaxDb" id="9823-ENSSSCP00000015994"/>
<dbReference type="PeptideAtlas" id="P18648"/>
<dbReference type="GeneID" id="397691"/>
<dbReference type="KEGG" id="ssc:397691"/>
<dbReference type="CTD" id="335"/>
<dbReference type="eggNOG" id="ENOG502S1XQ">
    <property type="taxonomic scope" value="Eukaryota"/>
</dbReference>
<dbReference type="HOGENOM" id="CLU_058447_1_0_1"/>
<dbReference type="InParanoid" id="P18648"/>
<dbReference type="OrthoDB" id="8727817at2759"/>
<dbReference type="TreeFam" id="TF334458"/>
<dbReference type="Proteomes" id="UP000008227">
    <property type="component" value="Unplaced"/>
</dbReference>
<dbReference type="Proteomes" id="UP000314985">
    <property type="component" value="Unplaced"/>
</dbReference>
<dbReference type="Proteomes" id="UP000694570">
    <property type="component" value="Unplaced"/>
</dbReference>
<dbReference type="Proteomes" id="UP000694571">
    <property type="component" value="Unplaced"/>
</dbReference>
<dbReference type="Proteomes" id="UP000694720">
    <property type="component" value="Unplaced"/>
</dbReference>
<dbReference type="Proteomes" id="UP000694722">
    <property type="component" value="Unplaced"/>
</dbReference>
<dbReference type="Proteomes" id="UP000694723">
    <property type="component" value="Unplaced"/>
</dbReference>
<dbReference type="Proteomes" id="UP000694724">
    <property type="component" value="Unplaced"/>
</dbReference>
<dbReference type="Proteomes" id="UP000694725">
    <property type="component" value="Unplaced"/>
</dbReference>
<dbReference type="Proteomes" id="UP000694726">
    <property type="component" value="Unplaced"/>
</dbReference>
<dbReference type="Proteomes" id="UP000694727">
    <property type="component" value="Unplaced"/>
</dbReference>
<dbReference type="Proteomes" id="UP000694728">
    <property type="component" value="Unplaced"/>
</dbReference>
<dbReference type="GO" id="GO:0042627">
    <property type="term" value="C:chylomicron"/>
    <property type="evidence" value="ECO:0000318"/>
    <property type="project" value="GO_Central"/>
</dbReference>
<dbReference type="GO" id="GO:0005615">
    <property type="term" value="C:extracellular space"/>
    <property type="evidence" value="ECO:0000314"/>
    <property type="project" value="AgBase"/>
</dbReference>
<dbReference type="GO" id="GO:1903561">
    <property type="term" value="C:extracellular vesicle"/>
    <property type="evidence" value="ECO:0000318"/>
    <property type="project" value="GO_Central"/>
</dbReference>
<dbReference type="GO" id="GO:0034364">
    <property type="term" value="C:high-density lipoprotein particle"/>
    <property type="evidence" value="ECO:0000318"/>
    <property type="project" value="GO_Central"/>
</dbReference>
<dbReference type="GO" id="GO:0034362">
    <property type="term" value="C:low-density lipoprotein particle"/>
    <property type="evidence" value="ECO:0000318"/>
    <property type="project" value="GO_Central"/>
</dbReference>
<dbReference type="GO" id="GO:0034361">
    <property type="term" value="C:very-low-density lipoprotein particle"/>
    <property type="evidence" value="ECO:0000318"/>
    <property type="project" value="GO_Central"/>
</dbReference>
<dbReference type="GO" id="GO:0120020">
    <property type="term" value="F:cholesterol transfer activity"/>
    <property type="evidence" value="ECO:0000318"/>
    <property type="project" value="GO_Central"/>
</dbReference>
<dbReference type="GO" id="GO:0060228">
    <property type="term" value="F:phosphatidylcholine-sterol O-acyltransferase activator activity"/>
    <property type="evidence" value="ECO:0000318"/>
    <property type="project" value="GO_Central"/>
</dbReference>
<dbReference type="GO" id="GO:0005543">
    <property type="term" value="F:phospholipid binding"/>
    <property type="evidence" value="ECO:0000318"/>
    <property type="project" value="GO_Central"/>
</dbReference>
<dbReference type="GO" id="GO:0042803">
    <property type="term" value="F:protein homodimerization activity"/>
    <property type="evidence" value="ECO:0000250"/>
    <property type="project" value="UniProtKB"/>
</dbReference>
<dbReference type="GO" id="GO:0055090">
    <property type="term" value="P:acylglycerol homeostasis"/>
    <property type="evidence" value="ECO:0000318"/>
    <property type="project" value="GO_Central"/>
</dbReference>
<dbReference type="GO" id="GO:0033344">
    <property type="term" value="P:cholesterol efflux"/>
    <property type="evidence" value="ECO:0000318"/>
    <property type="project" value="GO_Central"/>
</dbReference>
<dbReference type="GO" id="GO:0008203">
    <property type="term" value="P:cholesterol metabolic process"/>
    <property type="evidence" value="ECO:0000318"/>
    <property type="project" value="GO_Central"/>
</dbReference>
<dbReference type="GO" id="GO:0042157">
    <property type="term" value="P:lipoprotein metabolic process"/>
    <property type="evidence" value="ECO:0007669"/>
    <property type="project" value="InterPro"/>
</dbReference>
<dbReference type="GO" id="GO:0018206">
    <property type="term" value="P:peptidyl-methionine modification"/>
    <property type="evidence" value="ECO:0000250"/>
    <property type="project" value="UniProtKB"/>
</dbReference>
<dbReference type="GO" id="GO:0033700">
    <property type="term" value="P:phospholipid efflux"/>
    <property type="evidence" value="ECO:0000318"/>
    <property type="project" value="GO_Central"/>
</dbReference>
<dbReference type="GO" id="GO:0010875">
    <property type="term" value="P:positive regulation of cholesterol efflux"/>
    <property type="evidence" value="ECO:0000250"/>
    <property type="project" value="UniProtKB"/>
</dbReference>
<dbReference type="GO" id="GO:0050766">
    <property type="term" value="P:positive regulation of phagocytosis"/>
    <property type="evidence" value="ECO:0000250"/>
    <property type="project" value="UniProtKB"/>
</dbReference>
<dbReference type="GO" id="GO:1902995">
    <property type="term" value="P:positive regulation of phospholipid efflux"/>
    <property type="evidence" value="ECO:0000250"/>
    <property type="project" value="UniProtKB"/>
</dbReference>
<dbReference type="GO" id="GO:0018158">
    <property type="term" value="P:protein oxidation"/>
    <property type="evidence" value="ECO:0000250"/>
    <property type="project" value="UniProtKB"/>
</dbReference>
<dbReference type="GO" id="GO:0050821">
    <property type="term" value="P:protein stabilization"/>
    <property type="evidence" value="ECO:0000250"/>
    <property type="project" value="UniProtKB"/>
</dbReference>
<dbReference type="FunFam" id="1.20.120.20:FF:000001">
    <property type="entry name" value="Apolipoprotein A-I"/>
    <property type="match status" value="1"/>
</dbReference>
<dbReference type="FunFam" id="1.20.5.20:FF:000001">
    <property type="entry name" value="apolipoprotein A-I"/>
    <property type="match status" value="1"/>
</dbReference>
<dbReference type="Gene3D" id="1.20.5.20">
    <property type="match status" value="1"/>
</dbReference>
<dbReference type="Gene3D" id="6.10.140.380">
    <property type="match status" value="1"/>
</dbReference>
<dbReference type="Gene3D" id="1.20.120.20">
    <property type="entry name" value="Apolipoprotein"/>
    <property type="match status" value="1"/>
</dbReference>
<dbReference type="InterPro" id="IPR000074">
    <property type="entry name" value="ApoA_E"/>
</dbReference>
<dbReference type="InterPro" id="IPR050163">
    <property type="entry name" value="Apolipoprotein_A1/A4/E"/>
</dbReference>
<dbReference type="PANTHER" id="PTHR18976">
    <property type="entry name" value="APOLIPOPROTEIN"/>
    <property type="match status" value="1"/>
</dbReference>
<dbReference type="PANTHER" id="PTHR18976:SF11">
    <property type="entry name" value="APOLIPOPROTEIN A-I"/>
    <property type="match status" value="1"/>
</dbReference>
<dbReference type="Pfam" id="PF01442">
    <property type="entry name" value="Apolipoprotein"/>
    <property type="match status" value="1"/>
</dbReference>
<dbReference type="SUPFAM" id="SSF58113">
    <property type="entry name" value="Apolipoprotein A-I"/>
    <property type="match status" value="1"/>
</dbReference>
<gene>
    <name type="primary">APOA1</name>
</gene>